<gene>
    <name evidence="1" type="primary">rraA</name>
    <name type="ordered locus">EcHS_A4161</name>
</gene>
<sequence>MKYDTSELCDIYQEDVNVVEPLFSNFGGRASFGGQIITVKCFEDNGLLYDLLEQNGRGRVLVVDGGGSVRRALVDAELARLAVQNEWEGLVIYGAVRQVDDLEELDIGIQAMAAIPVGAAGEGIGESDVRVNFGGVTFFSGDHLYADNTGIILSEDPLDIE</sequence>
<accession>A8A735</accession>
<reference key="1">
    <citation type="journal article" date="2008" name="J. Bacteriol.">
        <title>The pangenome structure of Escherichia coli: comparative genomic analysis of E. coli commensal and pathogenic isolates.</title>
        <authorList>
            <person name="Rasko D.A."/>
            <person name="Rosovitz M.J."/>
            <person name="Myers G.S.A."/>
            <person name="Mongodin E.F."/>
            <person name="Fricke W.F."/>
            <person name="Gajer P."/>
            <person name="Crabtree J."/>
            <person name="Sebaihia M."/>
            <person name="Thomson N.R."/>
            <person name="Chaudhuri R."/>
            <person name="Henderson I.R."/>
            <person name="Sperandio V."/>
            <person name="Ravel J."/>
        </authorList>
    </citation>
    <scope>NUCLEOTIDE SEQUENCE [LARGE SCALE GENOMIC DNA]</scope>
    <source>
        <strain>HS</strain>
    </source>
</reference>
<keyword id="KW-0963">Cytoplasm</keyword>
<name>RRAA_ECOHS</name>
<proteinExistence type="inferred from homology"/>
<protein>
    <recommendedName>
        <fullName evidence="1">Regulator of ribonuclease activity A</fullName>
    </recommendedName>
</protein>
<evidence type="ECO:0000255" key="1">
    <source>
        <dbReference type="HAMAP-Rule" id="MF_00471"/>
    </source>
</evidence>
<comment type="function">
    <text evidence="1">Globally modulates RNA abundance by binding to RNase E (Rne) and regulating its endonucleolytic activity. Can modulate Rne action in a substrate-dependent manner by altering the composition of the degradosome. Modulates RNA-binding and helicase activities of the degradosome.</text>
</comment>
<comment type="subunit">
    <text evidence="1">Homotrimer. Binds to both RNA-binding sites in the C-terminal region of Rne and to RhlB.</text>
</comment>
<comment type="subcellular location">
    <subcellularLocation>
        <location evidence="1">Cytoplasm</location>
    </subcellularLocation>
</comment>
<comment type="similarity">
    <text evidence="1">Belongs to the RraA family.</text>
</comment>
<feature type="chain" id="PRO_1000060381" description="Regulator of ribonuclease activity A">
    <location>
        <begin position="1"/>
        <end position="161"/>
    </location>
</feature>
<organism>
    <name type="scientific">Escherichia coli O9:H4 (strain HS)</name>
    <dbReference type="NCBI Taxonomy" id="331112"/>
    <lineage>
        <taxon>Bacteria</taxon>
        <taxon>Pseudomonadati</taxon>
        <taxon>Pseudomonadota</taxon>
        <taxon>Gammaproteobacteria</taxon>
        <taxon>Enterobacterales</taxon>
        <taxon>Enterobacteriaceae</taxon>
        <taxon>Escherichia</taxon>
    </lineage>
</organism>
<dbReference type="EMBL" id="CP000802">
    <property type="protein sequence ID" value="ABV08339.1"/>
    <property type="molecule type" value="Genomic_DNA"/>
</dbReference>
<dbReference type="RefSeq" id="WP_000872908.1">
    <property type="nucleotide sequence ID" value="NC_009800.1"/>
</dbReference>
<dbReference type="SMR" id="A8A735"/>
<dbReference type="GeneID" id="93777969"/>
<dbReference type="KEGG" id="ecx:EcHS_A4161"/>
<dbReference type="HOGENOM" id="CLU_072626_4_0_6"/>
<dbReference type="GO" id="GO:0005829">
    <property type="term" value="C:cytosol"/>
    <property type="evidence" value="ECO:0007669"/>
    <property type="project" value="TreeGrafter"/>
</dbReference>
<dbReference type="GO" id="GO:0060698">
    <property type="term" value="F:endoribonuclease inhibitor activity"/>
    <property type="evidence" value="ECO:0007669"/>
    <property type="project" value="UniProtKB-UniRule"/>
</dbReference>
<dbReference type="GO" id="GO:0019899">
    <property type="term" value="F:enzyme binding"/>
    <property type="evidence" value="ECO:0007669"/>
    <property type="project" value="UniProtKB-UniRule"/>
</dbReference>
<dbReference type="GO" id="GO:1902369">
    <property type="term" value="P:negative regulation of RNA catabolic process"/>
    <property type="evidence" value="ECO:0007669"/>
    <property type="project" value="TreeGrafter"/>
</dbReference>
<dbReference type="CDD" id="cd16841">
    <property type="entry name" value="RraA_family"/>
    <property type="match status" value="1"/>
</dbReference>
<dbReference type="FunFam" id="3.50.30.40:FF:000001">
    <property type="entry name" value="Regulator of ribonuclease activity A"/>
    <property type="match status" value="1"/>
</dbReference>
<dbReference type="Gene3D" id="3.50.30.40">
    <property type="entry name" value="Ribonuclease E inhibitor RraA/RraA-like"/>
    <property type="match status" value="1"/>
</dbReference>
<dbReference type="HAMAP" id="MF_00471">
    <property type="entry name" value="RraA"/>
    <property type="match status" value="1"/>
</dbReference>
<dbReference type="InterPro" id="IPR010203">
    <property type="entry name" value="RraA"/>
</dbReference>
<dbReference type="InterPro" id="IPR005493">
    <property type="entry name" value="RraA/RraA-like"/>
</dbReference>
<dbReference type="InterPro" id="IPR036704">
    <property type="entry name" value="RraA/RraA-like_sf"/>
</dbReference>
<dbReference type="InterPro" id="IPR014339">
    <property type="entry name" value="RraA_gpbac"/>
</dbReference>
<dbReference type="NCBIfam" id="TIGR01935">
    <property type="entry name" value="NOT-MenG"/>
    <property type="match status" value="1"/>
</dbReference>
<dbReference type="NCBIfam" id="NF006875">
    <property type="entry name" value="PRK09372.1"/>
    <property type="match status" value="1"/>
</dbReference>
<dbReference type="NCBIfam" id="TIGR02998">
    <property type="entry name" value="RraA_entero"/>
    <property type="match status" value="1"/>
</dbReference>
<dbReference type="PANTHER" id="PTHR33254">
    <property type="entry name" value="4-HYDROXY-4-METHYL-2-OXOGLUTARATE ALDOLASE 3-RELATED"/>
    <property type="match status" value="1"/>
</dbReference>
<dbReference type="PANTHER" id="PTHR33254:SF29">
    <property type="entry name" value="REGULATOR OF RIBONUCLEASE ACTIVITY A"/>
    <property type="match status" value="1"/>
</dbReference>
<dbReference type="Pfam" id="PF03737">
    <property type="entry name" value="RraA-like"/>
    <property type="match status" value="1"/>
</dbReference>
<dbReference type="SUPFAM" id="SSF89562">
    <property type="entry name" value="RraA-like"/>
    <property type="match status" value="1"/>
</dbReference>